<proteinExistence type="inferred from homology"/>
<comment type="function">
    <text evidence="1">Involved in peptide bond synthesis. Stimulates efficient translation and peptide-bond synthesis on native or reconstituted 70S ribosomes in vitro. Probably functions indirectly by altering the affinity of the ribosome for aminoacyl-tRNA, thus increasing their reactivity as acceptors for peptidyl transferase.</text>
</comment>
<comment type="pathway">
    <text evidence="1">Protein biosynthesis; polypeptide chain elongation.</text>
</comment>
<comment type="subcellular location">
    <subcellularLocation>
        <location evidence="1">Cytoplasm</location>
    </subcellularLocation>
</comment>
<comment type="similarity">
    <text evidence="1">Belongs to the elongation factor P family.</text>
</comment>
<name>EFP_STRPG</name>
<gene>
    <name evidence="1" type="primary">efp</name>
    <name type="ordered locus">SpyM50303</name>
</gene>
<reference key="1">
    <citation type="journal article" date="2007" name="J. Bacteriol.">
        <title>Complete genome of acute rheumatic fever-associated serotype M5 Streptococcus pyogenes strain Manfredo.</title>
        <authorList>
            <person name="Holden M.T.G."/>
            <person name="Scott A."/>
            <person name="Cherevach I."/>
            <person name="Chillingworth T."/>
            <person name="Churcher C."/>
            <person name="Cronin A."/>
            <person name="Dowd L."/>
            <person name="Feltwell T."/>
            <person name="Hamlin N."/>
            <person name="Holroyd S."/>
            <person name="Jagels K."/>
            <person name="Moule S."/>
            <person name="Mungall K."/>
            <person name="Quail M.A."/>
            <person name="Price C."/>
            <person name="Rabbinowitsch E."/>
            <person name="Sharp S."/>
            <person name="Skelton J."/>
            <person name="Whitehead S."/>
            <person name="Barrell B.G."/>
            <person name="Kehoe M."/>
            <person name="Parkhill J."/>
        </authorList>
    </citation>
    <scope>NUCLEOTIDE SEQUENCE [LARGE SCALE GENOMIC DNA]</scope>
    <source>
        <strain>Manfredo</strain>
    </source>
</reference>
<protein>
    <recommendedName>
        <fullName evidence="1">Elongation factor P</fullName>
        <shortName evidence="1">EF-P</shortName>
    </recommendedName>
</protein>
<feature type="chain" id="PRO_1000010876" description="Elongation factor P">
    <location>
        <begin position="1"/>
        <end position="185"/>
    </location>
</feature>
<evidence type="ECO:0000255" key="1">
    <source>
        <dbReference type="HAMAP-Rule" id="MF_00141"/>
    </source>
</evidence>
<keyword id="KW-0963">Cytoplasm</keyword>
<keyword id="KW-0251">Elongation factor</keyword>
<keyword id="KW-0648">Protein biosynthesis</keyword>
<sequence length="185" mass="20467">MIEASKLKAGMTFEAEGKLIRVLEASHHKPGKGNTIMRMKLRDVRTGSTFDTTYRPDEKFEQAIIETVPAQYLYKMDDTAYFMNTDTYDQYEIPVANVEQELLYILENSDVKIQFYGSEVIGVTVPTTVELTVAETQPSIKGATVTGSGKPATLETGLVVNVPDFIEAGQKLIINTAEGTYVSRA</sequence>
<dbReference type="EMBL" id="AM295007">
    <property type="protein sequence ID" value="CAM29645.1"/>
    <property type="molecule type" value="Genomic_DNA"/>
</dbReference>
<dbReference type="RefSeq" id="WP_002988496.1">
    <property type="nucleotide sequence ID" value="NC_009332.1"/>
</dbReference>
<dbReference type="SMR" id="A2RCS2"/>
<dbReference type="GeneID" id="69900351"/>
<dbReference type="KEGG" id="spf:SpyM50303"/>
<dbReference type="HOGENOM" id="CLU_074944_3_0_9"/>
<dbReference type="UniPathway" id="UPA00345"/>
<dbReference type="GO" id="GO:0005737">
    <property type="term" value="C:cytoplasm"/>
    <property type="evidence" value="ECO:0007669"/>
    <property type="project" value="UniProtKB-SubCell"/>
</dbReference>
<dbReference type="GO" id="GO:0003746">
    <property type="term" value="F:translation elongation factor activity"/>
    <property type="evidence" value="ECO:0007669"/>
    <property type="project" value="UniProtKB-UniRule"/>
</dbReference>
<dbReference type="GO" id="GO:0043043">
    <property type="term" value="P:peptide biosynthetic process"/>
    <property type="evidence" value="ECO:0007669"/>
    <property type="project" value="InterPro"/>
</dbReference>
<dbReference type="CDD" id="cd04470">
    <property type="entry name" value="S1_EF-P_repeat_1"/>
    <property type="match status" value="1"/>
</dbReference>
<dbReference type="CDD" id="cd05794">
    <property type="entry name" value="S1_EF-P_repeat_2"/>
    <property type="match status" value="1"/>
</dbReference>
<dbReference type="FunFam" id="2.30.30.30:FF:000003">
    <property type="entry name" value="Elongation factor P"/>
    <property type="match status" value="1"/>
</dbReference>
<dbReference type="FunFam" id="2.40.50.140:FF:000004">
    <property type="entry name" value="Elongation factor P"/>
    <property type="match status" value="1"/>
</dbReference>
<dbReference type="FunFam" id="2.40.50.140:FF:000009">
    <property type="entry name" value="Elongation factor P"/>
    <property type="match status" value="1"/>
</dbReference>
<dbReference type="Gene3D" id="2.30.30.30">
    <property type="match status" value="1"/>
</dbReference>
<dbReference type="Gene3D" id="2.40.50.140">
    <property type="entry name" value="Nucleic acid-binding proteins"/>
    <property type="match status" value="2"/>
</dbReference>
<dbReference type="HAMAP" id="MF_00141">
    <property type="entry name" value="EF_P"/>
    <property type="match status" value="1"/>
</dbReference>
<dbReference type="InterPro" id="IPR015365">
    <property type="entry name" value="Elong-fact-P_C"/>
</dbReference>
<dbReference type="InterPro" id="IPR012340">
    <property type="entry name" value="NA-bd_OB-fold"/>
</dbReference>
<dbReference type="InterPro" id="IPR014722">
    <property type="entry name" value="Rib_uL2_dom2"/>
</dbReference>
<dbReference type="InterPro" id="IPR020599">
    <property type="entry name" value="Transl_elong_fac_P/YeiP"/>
</dbReference>
<dbReference type="InterPro" id="IPR013185">
    <property type="entry name" value="Transl_elong_KOW-like"/>
</dbReference>
<dbReference type="InterPro" id="IPR001059">
    <property type="entry name" value="Transl_elong_P/YeiP_cen"/>
</dbReference>
<dbReference type="InterPro" id="IPR013852">
    <property type="entry name" value="Transl_elong_P/YeiP_CS"/>
</dbReference>
<dbReference type="InterPro" id="IPR011768">
    <property type="entry name" value="Transl_elongation_fac_P"/>
</dbReference>
<dbReference type="InterPro" id="IPR008991">
    <property type="entry name" value="Translation_prot_SH3-like_sf"/>
</dbReference>
<dbReference type="NCBIfam" id="TIGR00038">
    <property type="entry name" value="efp"/>
    <property type="match status" value="1"/>
</dbReference>
<dbReference type="NCBIfam" id="NF001810">
    <property type="entry name" value="PRK00529.1"/>
    <property type="match status" value="1"/>
</dbReference>
<dbReference type="PANTHER" id="PTHR30053">
    <property type="entry name" value="ELONGATION FACTOR P"/>
    <property type="match status" value="1"/>
</dbReference>
<dbReference type="PANTHER" id="PTHR30053:SF12">
    <property type="entry name" value="ELONGATION FACTOR P (EF-P) FAMILY PROTEIN"/>
    <property type="match status" value="1"/>
</dbReference>
<dbReference type="Pfam" id="PF01132">
    <property type="entry name" value="EFP"/>
    <property type="match status" value="1"/>
</dbReference>
<dbReference type="Pfam" id="PF08207">
    <property type="entry name" value="EFP_N"/>
    <property type="match status" value="1"/>
</dbReference>
<dbReference type="Pfam" id="PF09285">
    <property type="entry name" value="Elong-fact-P_C"/>
    <property type="match status" value="1"/>
</dbReference>
<dbReference type="PIRSF" id="PIRSF005901">
    <property type="entry name" value="EF-P"/>
    <property type="match status" value="1"/>
</dbReference>
<dbReference type="SMART" id="SM01185">
    <property type="entry name" value="EFP"/>
    <property type="match status" value="1"/>
</dbReference>
<dbReference type="SMART" id="SM00841">
    <property type="entry name" value="Elong-fact-P_C"/>
    <property type="match status" value="1"/>
</dbReference>
<dbReference type="SUPFAM" id="SSF50249">
    <property type="entry name" value="Nucleic acid-binding proteins"/>
    <property type="match status" value="2"/>
</dbReference>
<dbReference type="SUPFAM" id="SSF50104">
    <property type="entry name" value="Translation proteins SH3-like domain"/>
    <property type="match status" value="1"/>
</dbReference>
<dbReference type="PROSITE" id="PS01275">
    <property type="entry name" value="EFP"/>
    <property type="match status" value="1"/>
</dbReference>
<organism>
    <name type="scientific">Streptococcus pyogenes serotype M5 (strain Manfredo)</name>
    <dbReference type="NCBI Taxonomy" id="160491"/>
    <lineage>
        <taxon>Bacteria</taxon>
        <taxon>Bacillati</taxon>
        <taxon>Bacillota</taxon>
        <taxon>Bacilli</taxon>
        <taxon>Lactobacillales</taxon>
        <taxon>Streptococcaceae</taxon>
        <taxon>Streptococcus</taxon>
    </lineage>
</organism>
<accession>A2RCS2</accession>